<proteinExistence type="predicted"/>
<dbReference type="EMBL" id="U00090">
    <property type="protein sequence ID" value="AAB91759.1"/>
    <property type="molecule type" value="Genomic_DNA"/>
</dbReference>
<dbReference type="RefSeq" id="NP_443957.1">
    <property type="nucleotide sequence ID" value="NC_000914.2"/>
</dbReference>
<dbReference type="RefSeq" id="WP_010875293.1">
    <property type="nucleotide sequence ID" value="NC_000914.2"/>
</dbReference>
<dbReference type="KEGG" id="rhi:NGR_a02680"/>
<dbReference type="eggNOG" id="ENOG50344AD">
    <property type="taxonomic scope" value="Bacteria"/>
</dbReference>
<dbReference type="HOGENOM" id="CLU_1642353_0_0_5"/>
<dbReference type="OrthoDB" id="6058471at2"/>
<dbReference type="Proteomes" id="UP000001054">
    <property type="component" value="Plasmid pNGR234a"/>
</dbReference>
<reference key="1">
    <citation type="journal article" date="1997" name="Nature">
        <title>Molecular basis of symbiosis between Rhizobium and legumes.</title>
        <authorList>
            <person name="Freiberg C.A."/>
            <person name="Fellay R."/>
            <person name="Bairoch A."/>
            <person name="Broughton W.J."/>
            <person name="Rosenthal A."/>
            <person name="Perret X."/>
        </authorList>
    </citation>
    <scope>NUCLEOTIDE SEQUENCE [LARGE SCALE GENOMIC DNA]</scope>
    <source>
        <strain>NBRC 101917 / NGR234</strain>
    </source>
</reference>
<reference key="2">
    <citation type="journal article" date="2009" name="Appl. Environ. Microbiol.">
        <title>Rhizobium sp. strain NGR234 possesses a remarkable number of secretion systems.</title>
        <authorList>
            <person name="Schmeisser C."/>
            <person name="Liesegang H."/>
            <person name="Krysciak D."/>
            <person name="Bakkou N."/>
            <person name="Le Quere A."/>
            <person name="Wollherr A."/>
            <person name="Heinemeyer I."/>
            <person name="Morgenstern B."/>
            <person name="Pommerening-Roeser A."/>
            <person name="Flores M."/>
            <person name="Palacios R."/>
            <person name="Brenner S."/>
            <person name="Gottschalk G."/>
            <person name="Schmitz R.A."/>
            <person name="Broughton W.J."/>
            <person name="Perret X."/>
            <person name="Strittmatter A.W."/>
            <person name="Streit W.R."/>
        </authorList>
    </citation>
    <scope>NUCLEOTIDE SEQUENCE [LARGE SCALE GENOMIC DNA]</scope>
    <source>
        <strain>NBRC 101917 / NGR234</strain>
    </source>
</reference>
<sequence length="161" mass="17374">MLSPSEFTIGTLGSAAPLSLILPRTKYEATMLVGHVDKAPAAVFLSGEFAFHYFPSTDNDSWRGLIVPGVRVEVDETSVFDQGQTMAPLGAAIRIDTRLAIRAKSEHSLSGSSALTIHDKLVSAGDLRAGFTRWQIVIGEGQTKRVLWQRSDEDEAAKSSA</sequence>
<keyword id="KW-0614">Plasmid</keyword>
<keyword id="KW-1185">Reference proteome</keyword>
<name>Y4LG_SINFN</name>
<protein>
    <recommendedName>
        <fullName>Uncharacterized protein y4lG</fullName>
    </recommendedName>
</protein>
<organism>
    <name type="scientific">Sinorhizobium fredii (strain NBRC 101917 / NGR234)</name>
    <dbReference type="NCBI Taxonomy" id="394"/>
    <lineage>
        <taxon>Bacteria</taxon>
        <taxon>Pseudomonadati</taxon>
        <taxon>Pseudomonadota</taxon>
        <taxon>Alphaproteobacteria</taxon>
        <taxon>Hyphomicrobiales</taxon>
        <taxon>Rhizobiaceae</taxon>
        <taxon>Sinorhizobium/Ensifer group</taxon>
        <taxon>Sinorhizobium</taxon>
    </lineage>
</organism>
<gene>
    <name type="ordered locus">NGR_a02680</name>
    <name type="ORF">y4lG</name>
</gene>
<geneLocation type="plasmid">
    <name>sym pNGR234a</name>
</geneLocation>
<feature type="chain" id="PRO_0000200901" description="Uncharacterized protein y4lG">
    <location>
        <begin position="1"/>
        <end position="161"/>
    </location>
</feature>
<accession>P55547</accession>